<organism>
    <name type="scientific">Dictyostelium discoideum</name>
    <name type="common">Social amoeba</name>
    <dbReference type="NCBI Taxonomy" id="44689"/>
    <lineage>
        <taxon>Eukaryota</taxon>
        <taxon>Amoebozoa</taxon>
        <taxon>Evosea</taxon>
        <taxon>Eumycetozoa</taxon>
        <taxon>Dictyostelia</taxon>
        <taxon>Dictyosteliales</taxon>
        <taxon>Dictyosteliaceae</taxon>
        <taxon>Dictyostelium</taxon>
    </lineage>
</organism>
<protein>
    <recommendedName>
        <fullName>Uncharacterized protein DDB_G0268226</fullName>
    </recommendedName>
</protein>
<accession>Q55F75</accession>
<feature type="chain" id="PRO_0000348212" description="Uncharacterized protein DDB_G0268226">
    <location>
        <begin position="1"/>
        <end position="62"/>
    </location>
</feature>
<feature type="region of interest" description="Disordered" evidence="1">
    <location>
        <begin position="1"/>
        <end position="62"/>
    </location>
</feature>
<feature type="compositionally biased region" description="Basic and acidic residues" evidence="1">
    <location>
        <begin position="7"/>
        <end position="29"/>
    </location>
</feature>
<feature type="compositionally biased region" description="Polar residues" evidence="1">
    <location>
        <begin position="32"/>
        <end position="43"/>
    </location>
</feature>
<keyword id="KW-1185">Reference proteome</keyword>
<proteinExistence type="predicted"/>
<dbReference type="EMBL" id="AAFI02000003">
    <property type="protein sequence ID" value="EAL73566.1"/>
    <property type="molecule type" value="Genomic_DNA"/>
</dbReference>
<dbReference type="RefSeq" id="XP_647658.1">
    <property type="nucleotide sequence ID" value="XM_642566.1"/>
</dbReference>
<dbReference type="FunCoup" id="Q55F75">
    <property type="interactions" value="8"/>
</dbReference>
<dbReference type="PaxDb" id="44689-DDB0189878"/>
<dbReference type="EnsemblProtists" id="EAL73566">
    <property type="protein sequence ID" value="EAL73566"/>
    <property type="gene ID" value="DDB_G0268226"/>
</dbReference>
<dbReference type="GeneID" id="8616475"/>
<dbReference type="KEGG" id="ddi:DDB_G0268226"/>
<dbReference type="dictyBase" id="DDB_G0268226"/>
<dbReference type="VEuPathDB" id="AmoebaDB:DDB_G0268226"/>
<dbReference type="eggNOG" id="ENOG502RIN5">
    <property type="taxonomic scope" value="Eukaryota"/>
</dbReference>
<dbReference type="HOGENOM" id="CLU_2908759_0_0_1"/>
<dbReference type="InParanoid" id="Q55F75"/>
<dbReference type="OMA" id="RKERVWT"/>
<dbReference type="PRO" id="PR:Q55F75"/>
<dbReference type="Proteomes" id="UP000002195">
    <property type="component" value="Chromosome 1"/>
</dbReference>
<sequence>MTSTQNLKDKFEEEIRQQKEGKGKKEKVWTPHSDSSYNKQTAVKFSGVQGGPPPKKSLSQLP</sequence>
<gene>
    <name type="ORF">DDB_G0268226</name>
</gene>
<reference key="1">
    <citation type="journal article" date="2005" name="Nature">
        <title>The genome of the social amoeba Dictyostelium discoideum.</title>
        <authorList>
            <person name="Eichinger L."/>
            <person name="Pachebat J.A."/>
            <person name="Gloeckner G."/>
            <person name="Rajandream M.A."/>
            <person name="Sucgang R."/>
            <person name="Berriman M."/>
            <person name="Song J."/>
            <person name="Olsen R."/>
            <person name="Szafranski K."/>
            <person name="Xu Q."/>
            <person name="Tunggal B."/>
            <person name="Kummerfeld S."/>
            <person name="Madera M."/>
            <person name="Konfortov B.A."/>
            <person name="Rivero F."/>
            <person name="Bankier A.T."/>
            <person name="Lehmann R."/>
            <person name="Hamlin N."/>
            <person name="Davies R."/>
            <person name="Gaudet P."/>
            <person name="Fey P."/>
            <person name="Pilcher K."/>
            <person name="Chen G."/>
            <person name="Saunders D."/>
            <person name="Sodergren E.J."/>
            <person name="Davis P."/>
            <person name="Kerhornou A."/>
            <person name="Nie X."/>
            <person name="Hall N."/>
            <person name="Anjard C."/>
            <person name="Hemphill L."/>
            <person name="Bason N."/>
            <person name="Farbrother P."/>
            <person name="Desany B."/>
            <person name="Just E."/>
            <person name="Morio T."/>
            <person name="Rost R."/>
            <person name="Churcher C.M."/>
            <person name="Cooper J."/>
            <person name="Haydock S."/>
            <person name="van Driessche N."/>
            <person name="Cronin A."/>
            <person name="Goodhead I."/>
            <person name="Muzny D.M."/>
            <person name="Mourier T."/>
            <person name="Pain A."/>
            <person name="Lu M."/>
            <person name="Harper D."/>
            <person name="Lindsay R."/>
            <person name="Hauser H."/>
            <person name="James K.D."/>
            <person name="Quiles M."/>
            <person name="Madan Babu M."/>
            <person name="Saito T."/>
            <person name="Buchrieser C."/>
            <person name="Wardroper A."/>
            <person name="Felder M."/>
            <person name="Thangavelu M."/>
            <person name="Johnson D."/>
            <person name="Knights A."/>
            <person name="Loulseged H."/>
            <person name="Mungall K.L."/>
            <person name="Oliver K."/>
            <person name="Price C."/>
            <person name="Quail M.A."/>
            <person name="Urushihara H."/>
            <person name="Hernandez J."/>
            <person name="Rabbinowitsch E."/>
            <person name="Steffen D."/>
            <person name="Sanders M."/>
            <person name="Ma J."/>
            <person name="Kohara Y."/>
            <person name="Sharp S."/>
            <person name="Simmonds M.N."/>
            <person name="Spiegler S."/>
            <person name="Tivey A."/>
            <person name="Sugano S."/>
            <person name="White B."/>
            <person name="Walker D."/>
            <person name="Woodward J.R."/>
            <person name="Winckler T."/>
            <person name="Tanaka Y."/>
            <person name="Shaulsky G."/>
            <person name="Schleicher M."/>
            <person name="Weinstock G.M."/>
            <person name="Rosenthal A."/>
            <person name="Cox E.C."/>
            <person name="Chisholm R.L."/>
            <person name="Gibbs R.A."/>
            <person name="Loomis W.F."/>
            <person name="Platzer M."/>
            <person name="Kay R.R."/>
            <person name="Williams J.G."/>
            <person name="Dear P.H."/>
            <person name="Noegel A.A."/>
            <person name="Barrell B.G."/>
            <person name="Kuspa A."/>
        </authorList>
    </citation>
    <scope>NUCLEOTIDE SEQUENCE [LARGE SCALE GENOMIC DNA]</scope>
    <source>
        <strain>AX4</strain>
    </source>
</reference>
<name>Y9878_DICDI</name>
<evidence type="ECO:0000256" key="1">
    <source>
        <dbReference type="SAM" id="MobiDB-lite"/>
    </source>
</evidence>